<sequence length="481" mass="52188">MGDAESTKDRLLLPVERVENVTWSDLRDGSFTVELKRLIFFAAPMAAVVIAQFMLQIVSMMMVGHLGNLSLASASLASSFCNVTGFSFIIGLSCALDTLSGQAYGAKLYRKLGVQTYTAMFCLALVCLPLSLIWFNMEKLLLILGQDPSIAHEAGKYATWLIPGLFAYAVLQPLTRYFQNQSLITPLLITSYVVFCIHVPLCWFLVYNSGLGNLGGALAISLSNWLYAIFLGSFMYYSSACSETRAPLSMEIFDGIGEFFKYALPSAAMICLEWWSYELIILLSGLLPNPQLETSVLSVCLQTISTMYSIPLAIAAAASTRISNELGAGNSRAAHIVVYAAMSLAVIDALIVSMSLLIGRNLFGHIFSSDKETIDYVAKMAPLVSISLMLDALQGVLSGIARGCGWQHIGAYINLGAFYLWGIPIAASLAFWIHLKGVGLWIGIQAGAVLQTLLLALVTGCTNWESQADKARNRMALAYGT</sequence>
<evidence type="ECO:0000255" key="1"/>
<evidence type="ECO:0000303" key="2">
    <source>
    </source>
</evidence>
<evidence type="ECO:0000305" key="3"/>
<evidence type="ECO:0000312" key="4">
    <source>
        <dbReference type="Araport" id="AT1G15170"/>
    </source>
</evidence>
<evidence type="ECO:0000312" key="5">
    <source>
        <dbReference type="EMBL" id="AAD39644.1"/>
    </source>
</evidence>
<organism>
    <name type="scientific">Arabidopsis thaliana</name>
    <name type="common">Mouse-ear cress</name>
    <dbReference type="NCBI Taxonomy" id="3702"/>
    <lineage>
        <taxon>Eukaryota</taxon>
        <taxon>Viridiplantae</taxon>
        <taxon>Streptophyta</taxon>
        <taxon>Embryophyta</taxon>
        <taxon>Tracheophyta</taxon>
        <taxon>Spermatophyta</taxon>
        <taxon>Magnoliopsida</taxon>
        <taxon>eudicotyledons</taxon>
        <taxon>Gunneridae</taxon>
        <taxon>Pentapetalae</taxon>
        <taxon>rosids</taxon>
        <taxon>malvids</taxon>
        <taxon>Brassicales</taxon>
        <taxon>Brassicaceae</taxon>
        <taxon>Camelineae</taxon>
        <taxon>Arabidopsis</taxon>
    </lineage>
</organism>
<accession>Q8L731</accession>
<accession>Q9XI52</accession>
<dbReference type="EMBL" id="AC007591">
    <property type="protein sequence ID" value="AAD39644.1"/>
    <property type="status" value="ALT_SEQ"/>
    <property type="molecule type" value="Genomic_DNA"/>
</dbReference>
<dbReference type="EMBL" id="CP002684">
    <property type="protein sequence ID" value="AEE29277.1"/>
    <property type="molecule type" value="Genomic_DNA"/>
</dbReference>
<dbReference type="EMBL" id="AY139985">
    <property type="protein sequence ID" value="AAM98128.1"/>
    <property type="molecule type" value="mRNA"/>
</dbReference>
<dbReference type="EMBL" id="BT006616">
    <property type="protein sequence ID" value="AAP31960.1"/>
    <property type="molecule type" value="mRNA"/>
</dbReference>
<dbReference type="PIR" id="F86285">
    <property type="entry name" value="F86285"/>
</dbReference>
<dbReference type="RefSeq" id="NP_172969.1">
    <property type="nucleotide sequence ID" value="NM_101385.3"/>
</dbReference>
<dbReference type="SMR" id="Q8L731"/>
<dbReference type="FunCoup" id="Q8L731">
    <property type="interactions" value="377"/>
</dbReference>
<dbReference type="PaxDb" id="3702-AT1G15170.1"/>
<dbReference type="ProteomicsDB" id="221929"/>
<dbReference type="EnsemblPlants" id="AT1G15170.1">
    <property type="protein sequence ID" value="AT1G15170.1"/>
    <property type="gene ID" value="AT1G15170"/>
</dbReference>
<dbReference type="GeneID" id="838083"/>
<dbReference type="Gramene" id="AT1G15170.1">
    <property type="protein sequence ID" value="AT1G15170.1"/>
    <property type="gene ID" value="AT1G15170"/>
</dbReference>
<dbReference type="KEGG" id="ath:AT1G15170"/>
<dbReference type="Araport" id="AT1G15170"/>
<dbReference type="TAIR" id="AT1G15170"/>
<dbReference type="eggNOG" id="KOG1347">
    <property type="taxonomic scope" value="Eukaryota"/>
</dbReference>
<dbReference type="HOGENOM" id="CLU_012893_1_0_1"/>
<dbReference type="InParanoid" id="Q8L731"/>
<dbReference type="OMA" id="FSTECER"/>
<dbReference type="OrthoDB" id="2126698at2759"/>
<dbReference type="PhylomeDB" id="Q8L731"/>
<dbReference type="PRO" id="PR:Q8L731"/>
<dbReference type="Proteomes" id="UP000006548">
    <property type="component" value="Chromosome 1"/>
</dbReference>
<dbReference type="ExpressionAtlas" id="Q8L731">
    <property type="expression patterns" value="baseline and differential"/>
</dbReference>
<dbReference type="GO" id="GO:0009507">
    <property type="term" value="C:chloroplast"/>
    <property type="evidence" value="ECO:0007005"/>
    <property type="project" value="TAIR"/>
</dbReference>
<dbReference type="GO" id="GO:0016020">
    <property type="term" value="C:membrane"/>
    <property type="evidence" value="ECO:0007669"/>
    <property type="project" value="UniProtKB-SubCell"/>
</dbReference>
<dbReference type="GO" id="GO:0015297">
    <property type="term" value="F:antiporter activity"/>
    <property type="evidence" value="ECO:0007669"/>
    <property type="project" value="InterPro"/>
</dbReference>
<dbReference type="GO" id="GO:0042910">
    <property type="term" value="F:xenobiotic transmembrane transporter activity"/>
    <property type="evidence" value="ECO:0007669"/>
    <property type="project" value="InterPro"/>
</dbReference>
<dbReference type="GO" id="GO:1990961">
    <property type="term" value="P:xenobiotic detoxification by transmembrane export across the plasma membrane"/>
    <property type="evidence" value="ECO:0007669"/>
    <property type="project" value="InterPro"/>
</dbReference>
<dbReference type="CDD" id="cd13132">
    <property type="entry name" value="MATE_eukaryotic"/>
    <property type="match status" value="1"/>
</dbReference>
<dbReference type="InterPro" id="IPR045069">
    <property type="entry name" value="MATE_euk"/>
</dbReference>
<dbReference type="InterPro" id="IPR002528">
    <property type="entry name" value="MATE_fam"/>
</dbReference>
<dbReference type="NCBIfam" id="TIGR00797">
    <property type="entry name" value="matE"/>
    <property type="match status" value="1"/>
</dbReference>
<dbReference type="PANTHER" id="PTHR11206">
    <property type="entry name" value="MULTIDRUG RESISTANCE PROTEIN"/>
    <property type="match status" value="1"/>
</dbReference>
<dbReference type="Pfam" id="PF01554">
    <property type="entry name" value="MatE"/>
    <property type="match status" value="2"/>
</dbReference>
<feature type="chain" id="PRO_0000434055" description="Protein DETOXIFICATION 12">
    <location>
        <begin position="1"/>
        <end position="481"/>
    </location>
</feature>
<feature type="transmembrane region" description="Helical" evidence="1">
    <location>
        <begin position="38"/>
        <end position="58"/>
    </location>
</feature>
<feature type="transmembrane region" description="Helical" evidence="1">
    <location>
        <begin position="76"/>
        <end position="96"/>
    </location>
</feature>
<feature type="transmembrane region" description="Helical" evidence="1">
    <location>
        <begin position="117"/>
        <end position="137"/>
    </location>
</feature>
<feature type="transmembrane region" description="Helical" evidence="1">
    <location>
        <begin position="154"/>
        <end position="174"/>
    </location>
</feature>
<feature type="transmembrane region" description="Helical" evidence="1">
    <location>
        <begin position="187"/>
        <end position="207"/>
    </location>
</feature>
<feature type="transmembrane region" description="Helical" evidence="1">
    <location>
        <begin position="214"/>
        <end position="234"/>
    </location>
</feature>
<feature type="transmembrane region" description="Helical" evidence="1">
    <location>
        <begin position="267"/>
        <end position="287"/>
    </location>
</feature>
<feature type="transmembrane region" description="Helical" evidence="1">
    <location>
        <begin position="296"/>
        <end position="316"/>
    </location>
</feature>
<feature type="transmembrane region" description="Helical" evidence="1">
    <location>
        <begin position="336"/>
        <end position="356"/>
    </location>
</feature>
<feature type="transmembrane region" description="Helical" evidence="1">
    <location>
        <begin position="380"/>
        <end position="400"/>
    </location>
</feature>
<feature type="transmembrane region" description="Helical" evidence="1">
    <location>
        <begin position="415"/>
        <end position="435"/>
    </location>
</feature>
<feature type="transmembrane region" description="Helical" evidence="1">
    <location>
        <begin position="438"/>
        <end position="458"/>
    </location>
</feature>
<comment type="subcellular location">
    <subcellularLocation>
        <location evidence="1">Membrane</location>
        <topology evidence="1">Multi-pass membrane protein</topology>
    </subcellularLocation>
</comment>
<comment type="similarity">
    <text evidence="3">Belongs to the multi antimicrobial extrusion (MATE) (TC 2.A.66.1) family.</text>
</comment>
<comment type="sequence caution" evidence="3">
    <conflict type="erroneous gene model prediction">
        <sequence resource="EMBL-CDS" id="AAD39644"/>
    </conflict>
</comment>
<gene>
    <name evidence="2" type="primary">DTX12</name>
    <name evidence="4" type="ordered locus">At1g15170</name>
    <name evidence="5" type="ORF">F9L1.11</name>
</gene>
<protein>
    <recommendedName>
        <fullName evidence="2">Protein DETOXIFICATION 12</fullName>
        <shortName evidence="2">AtDTX12</shortName>
    </recommendedName>
    <alternativeName>
        <fullName evidence="3">Multidrug and toxic compound extrusion protein 12</fullName>
        <shortName evidence="3">MATE protein 12</shortName>
    </alternativeName>
</protein>
<name>DTX12_ARATH</name>
<proteinExistence type="evidence at transcript level"/>
<reference key="1">
    <citation type="journal article" date="2000" name="Nature">
        <title>Sequence and analysis of chromosome 1 of the plant Arabidopsis thaliana.</title>
        <authorList>
            <person name="Theologis A."/>
            <person name="Ecker J.R."/>
            <person name="Palm C.J."/>
            <person name="Federspiel N.A."/>
            <person name="Kaul S."/>
            <person name="White O."/>
            <person name="Alonso J."/>
            <person name="Altafi H."/>
            <person name="Araujo R."/>
            <person name="Bowman C.L."/>
            <person name="Brooks S.Y."/>
            <person name="Buehler E."/>
            <person name="Chan A."/>
            <person name="Chao Q."/>
            <person name="Chen H."/>
            <person name="Cheuk R.F."/>
            <person name="Chin C.W."/>
            <person name="Chung M.K."/>
            <person name="Conn L."/>
            <person name="Conway A.B."/>
            <person name="Conway A.R."/>
            <person name="Creasy T.H."/>
            <person name="Dewar K."/>
            <person name="Dunn P."/>
            <person name="Etgu P."/>
            <person name="Feldblyum T.V."/>
            <person name="Feng J.-D."/>
            <person name="Fong B."/>
            <person name="Fujii C.Y."/>
            <person name="Gill J.E."/>
            <person name="Goldsmith A.D."/>
            <person name="Haas B."/>
            <person name="Hansen N.F."/>
            <person name="Hughes B."/>
            <person name="Huizar L."/>
            <person name="Hunter J.L."/>
            <person name="Jenkins J."/>
            <person name="Johnson-Hopson C."/>
            <person name="Khan S."/>
            <person name="Khaykin E."/>
            <person name="Kim C.J."/>
            <person name="Koo H.L."/>
            <person name="Kremenetskaia I."/>
            <person name="Kurtz D.B."/>
            <person name="Kwan A."/>
            <person name="Lam B."/>
            <person name="Langin-Hooper S."/>
            <person name="Lee A."/>
            <person name="Lee J.M."/>
            <person name="Lenz C.A."/>
            <person name="Li J.H."/>
            <person name="Li Y.-P."/>
            <person name="Lin X."/>
            <person name="Liu S.X."/>
            <person name="Liu Z.A."/>
            <person name="Luros J.S."/>
            <person name="Maiti R."/>
            <person name="Marziali A."/>
            <person name="Militscher J."/>
            <person name="Miranda M."/>
            <person name="Nguyen M."/>
            <person name="Nierman W.C."/>
            <person name="Osborne B.I."/>
            <person name="Pai G."/>
            <person name="Peterson J."/>
            <person name="Pham P.K."/>
            <person name="Rizzo M."/>
            <person name="Rooney T."/>
            <person name="Rowley D."/>
            <person name="Sakano H."/>
            <person name="Salzberg S.L."/>
            <person name="Schwartz J.R."/>
            <person name="Shinn P."/>
            <person name="Southwick A.M."/>
            <person name="Sun H."/>
            <person name="Tallon L.J."/>
            <person name="Tambunga G."/>
            <person name="Toriumi M.J."/>
            <person name="Town C.D."/>
            <person name="Utterback T."/>
            <person name="Van Aken S."/>
            <person name="Vaysberg M."/>
            <person name="Vysotskaia V.S."/>
            <person name="Walker M."/>
            <person name="Wu D."/>
            <person name="Yu G."/>
            <person name="Fraser C.M."/>
            <person name="Venter J.C."/>
            <person name="Davis R.W."/>
        </authorList>
    </citation>
    <scope>NUCLEOTIDE SEQUENCE [LARGE SCALE GENOMIC DNA]</scope>
    <source>
        <strain>cv. Columbia</strain>
    </source>
</reference>
<reference key="2">
    <citation type="journal article" date="2017" name="Plant J.">
        <title>Araport11: a complete reannotation of the Arabidopsis thaliana reference genome.</title>
        <authorList>
            <person name="Cheng C.Y."/>
            <person name="Krishnakumar V."/>
            <person name="Chan A.P."/>
            <person name="Thibaud-Nissen F."/>
            <person name="Schobel S."/>
            <person name="Town C.D."/>
        </authorList>
    </citation>
    <scope>GENOME REANNOTATION</scope>
    <source>
        <strain>cv. Columbia</strain>
    </source>
</reference>
<reference key="3">
    <citation type="journal article" date="2003" name="Science">
        <title>Empirical analysis of transcriptional activity in the Arabidopsis genome.</title>
        <authorList>
            <person name="Yamada K."/>
            <person name="Lim J."/>
            <person name="Dale J.M."/>
            <person name="Chen H."/>
            <person name="Shinn P."/>
            <person name="Palm C.J."/>
            <person name="Southwick A.M."/>
            <person name="Wu H.C."/>
            <person name="Kim C.J."/>
            <person name="Nguyen M."/>
            <person name="Pham P.K."/>
            <person name="Cheuk R.F."/>
            <person name="Karlin-Newmann G."/>
            <person name="Liu S.X."/>
            <person name="Lam B."/>
            <person name="Sakano H."/>
            <person name="Wu T."/>
            <person name="Yu G."/>
            <person name="Miranda M."/>
            <person name="Quach H.L."/>
            <person name="Tripp M."/>
            <person name="Chang C.H."/>
            <person name="Lee J.M."/>
            <person name="Toriumi M.J."/>
            <person name="Chan M.M."/>
            <person name="Tang C.C."/>
            <person name="Onodera C.S."/>
            <person name="Deng J.M."/>
            <person name="Akiyama K."/>
            <person name="Ansari Y."/>
            <person name="Arakawa T."/>
            <person name="Banh J."/>
            <person name="Banno F."/>
            <person name="Bowser L."/>
            <person name="Brooks S.Y."/>
            <person name="Carninci P."/>
            <person name="Chao Q."/>
            <person name="Choy N."/>
            <person name="Enju A."/>
            <person name="Goldsmith A.D."/>
            <person name="Gurjal M."/>
            <person name="Hansen N.F."/>
            <person name="Hayashizaki Y."/>
            <person name="Johnson-Hopson C."/>
            <person name="Hsuan V.W."/>
            <person name="Iida K."/>
            <person name="Karnes M."/>
            <person name="Khan S."/>
            <person name="Koesema E."/>
            <person name="Ishida J."/>
            <person name="Jiang P.X."/>
            <person name="Jones T."/>
            <person name="Kawai J."/>
            <person name="Kamiya A."/>
            <person name="Meyers C."/>
            <person name="Nakajima M."/>
            <person name="Narusaka M."/>
            <person name="Seki M."/>
            <person name="Sakurai T."/>
            <person name="Satou M."/>
            <person name="Tamse R."/>
            <person name="Vaysberg M."/>
            <person name="Wallender E.K."/>
            <person name="Wong C."/>
            <person name="Yamamura Y."/>
            <person name="Yuan S."/>
            <person name="Shinozaki K."/>
            <person name="Davis R.W."/>
            <person name="Theologis A."/>
            <person name="Ecker J.R."/>
        </authorList>
    </citation>
    <scope>NUCLEOTIDE SEQUENCE [LARGE SCALE MRNA]</scope>
    <source>
        <strain>cv. Columbia</strain>
    </source>
</reference>
<reference key="4">
    <citation type="journal article" date="2002" name="J. Biol. Chem.">
        <title>Functional cloning and characterization of a plant efflux carrier for multidrug and heavy metal detoxification.</title>
        <authorList>
            <person name="Li L."/>
            <person name="He Z."/>
            <person name="Pandey G.K."/>
            <person name="Tsuchiya T."/>
            <person name="Luan S."/>
        </authorList>
    </citation>
    <scope>GENE FAMILY</scope>
    <scope>NOMENCLATURE</scope>
</reference>
<reference key="5">
    <citation type="journal article" date="2003" name="Eur. J. Biochem.">
        <title>The multidrug/oligosaccharidyl-lipid/polysaccharide (MOP) exporter superfamily.</title>
        <authorList>
            <person name="Hvorup R.N."/>
            <person name="Winnen B."/>
            <person name="Chang A.B."/>
            <person name="Jiang Y."/>
            <person name="Zhou X.F."/>
            <person name="Saier M.H. Jr."/>
        </authorList>
    </citation>
    <scope>GENE FAMILY</scope>
</reference>
<keyword id="KW-0472">Membrane</keyword>
<keyword id="KW-1185">Reference proteome</keyword>
<keyword id="KW-0812">Transmembrane</keyword>
<keyword id="KW-1133">Transmembrane helix</keyword>
<keyword id="KW-0813">Transport</keyword>